<sequence>MEDENTTIIMASLSALSPSHLTNLTHSILSISHHHRRRLGAVLSSPTLFSLTLRHLLSLSLPDKTHLIANHLLSLLHPLLIHRKHHSSYAVTMKLRDLDAVVLLLFLCETHQLHPDVLEASADNWREILGNTYSNNMLSNNSGLWTCDAGILMPYIETLVRCKRFVDIMGGYNHLRRRDQKEGYQVPAARAAVVALRAVEVFNVAASNAGEVECVICKEEMSEGRDVCEMPCQHFFHWKCILPWLSKKNTCPFCRFQLPTDDVFSEIQRLWEILVKSSELHVA</sequence>
<proteinExistence type="evidence at protein level"/>
<organism>
    <name type="scientific">Arabidopsis thaliana</name>
    <name type="common">Mouse-ear cress</name>
    <dbReference type="NCBI Taxonomy" id="3702"/>
    <lineage>
        <taxon>Eukaryota</taxon>
        <taxon>Viridiplantae</taxon>
        <taxon>Streptophyta</taxon>
        <taxon>Embryophyta</taxon>
        <taxon>Tracheophyta</taxon>
        <taxon>Spermatophyta</taxon>
        <taxon>Magnoliopsida</taxon>
        <taxon>eudicotyledons</taxon>
        <taxon>Gunneridae</taxon>
        <taxon>Pentapetalae</taxon>
        <taxon>rosids</taxon>
        <taxon>malvids</taxon>
        <taxon>Brassicales</taxon>
        <taxon>Brassicaceae</taxon>
        <taxon>Camelineae</taxon>
        <taxon>Arabidopsis</taxon>
    </lineage>
</organism>
<keyword id="KW-0035">Amyloplast</keyword>
<keyword id="KW-0479">Metal-binding</keyword>
<keyword id="KW-0934">Plastid</keyword>
<keyword id="KW-1185">Reference proteome</keyword>
<keyword id="KW-0808">Transferase</keyword>
<keyword id="KW-0809">Transit peptide</keyword>
<keyword id="KW-0832">Ubl conjugation</keyword>
<keyword id="KW-0862">Zinc</keyword>
<keyword id="KW-0863">Zinc-finger</keyword>
<comment type="function">
    <text evidence="4">E3 ubiquitin-protein ligase which accepts ubiquitin from an E2 ubiquitin-conjugating enzyme in the form of a thioester and then directly transfers the ubiquitin to targeted substrates. Modulates amyloplast dynamics and sedimentation in statocytes during inflorescence, hypocotyl and root gravitropism, probably by regulating amyloplast interaction with actin filaments (AFs) in endodermal cells.</text>
</comment>
<comment type="catalytic activity">
    <reaction>
        <text>S-ubiquitinyl-[E2 ubiquitin-conjugating enzyme]-L-cysteine + [acceptor protein]-L-lysine = [E2 ubiquitin-conjugating enzyme]-L-cysteine + N(6)-ubiquitinyl-[acceptor protein]-L-lysine.</text>
        <dbReference type="EC" id="2.3.2.27"/>
    </reaction>
</comment>
<comment type="pathway">
    <text>Protein modification; protein ubiquitination.</text>
</comment>
<comment type="subcellular location">
    <subcellularLocation>
        <location evidence="4">Plastid</location>
        <location evidence="4">Amyloplast</location>
    </subcellularLocation>
    <text>Localized at amyloplasts within gravity-sensing cells.</text>
</comment>
<comment type="tissue specificity">
    <text evidence="4">Expressed in seedlings, hypocotyls, roots and stems. Present especially in hypocotyl and inflorescence endodermis, as well as in root cap columella, tissues that act as statocytes.</text>
</comment>
<comment type="PTM">
    <text evidence="1">Auto-ubiquitinated as part of the enzymatic reaction.</text>
</comment>
<comment type="disruption phenotype">
    <text evidence="4">Reduced gravitropism, altered amyloplasts sedimentation but increased amyloplasts saltatory movement. Abnormal interactions between amyloplasts and actin filaments (AFs) in endodermal cells.</text>
</comment>
<comment type="sequence caution" evidence="5">
    <conflict type="erroneous initiation">
        <sequence resource="EMBL-CDS" id="CAB86029"/>
    </conflict>
    <text>Truncated N-terminus.</text>
</comment>
<gene>
    <name type="primary">SGR9</name>
    <name type="ordered locus">At5g02750</name>
    <name type="ORF">F9G14.60</name>
</gene>
<protein>
    <recommendedName>
        <fullName>E3 ubiquitin-protein ligase SGR9, amyloplastic</fullName>
        <ecNumber>2.3.2.27</ecNumber>
    </recommendedName>
    <alternativeName>
        <fullName>Protein SHOOT GRAVITROPISM 9</fullName>
    </alternativeName>
    <alternativeName>
        <fullName evidence="5">RING-type E3 ubiquitin transferase SGR9</fullName>
    </alternativeName>
</protein>
<feature type="transit peptide" description="Amyloplast" evidence="2">
    <location>
        <begin position="1"/>
        <end position="32"/>
    </location>
</feature>
<feature type="chain" id="PRO_0000429062" description="E3 ubiquitin-protein ligase SGR9, amyloplastic">
    <location>
        <begin position="33"/>
        <end position="283"/>
    </location>
</feature>
<feature type="zinc finger region" description="RING-type; atypical" evidence="3">
    <location>
        <begin position="214"/>
        <end position="255"/>
    </location>
</feature>
<feature type="mutagenesis site" description="Reduced E3 ligase activity." evidence="4">
    <original>C</original>
    <variation>A</variation>
    <location>
        <position position="232"/>
    </location>
</feature>
<feature type="mutagenesis site" description="Reduced E3 ligase activity." evidence="4">
    <original>W</original>
    <variation>A</variation>
    <location>
        <position position="244"/>
    </location>
</feature>
<evidence type="ECO:0000250" key="1"/>
<evidence type="ECO:0000255" key="2"/>
<evidence type="ECO:0000255" key="3">
    <source>
        <dbReference type="PROSITE-ProRule" id="PRU00175"/>
    </source>
</evidence>
<evidence type="ECO:0000269" key="4">
    <source>
    </source>
</evidence>
<evidence type="ECO:0000305" key="5"/>
<dbReference type="EC" id="2.3.2.27"/>
<dbReference type="EMBL" id="AL162973">
    <property type="protein sequence ID" value="CAB86029.1"/>
    <property type="status" value="ALT_INIT"/>
    <property type="molecule type" value="Genomic_DNA"/>
</dbReference>
<dbReference type="EMBL" id="CP002688">
    <property type="protein sequence ID" value="AED90513.1"/>
    <property type="molecule type" value="Genomic_DNA"/>
</dbReference>
<dbReference type="EMBL" id="AK118262">
    <property type="protein sequence ID" value="BAC42880.1"/>
    <property type="molecule type" value="mRNA"/>
</dbReference>
<dbReference type="EMBL" id="BT005552">
    <property type="protein sequence ID" value="AAO63972.1"/>
    <property type="molecule type" value="mRNA"/>
</dbReference>
<dbReference type="PIR" id="T48296">
    <property type="entry name" value="T48296"/>
</dbReference>
<dbReference type="RefSeq" id="NP_195895.2">
    <property type="nucleotide sequence ID" value="NM_120353.3"/>
</dbReference>
<dbReference type="SMR" id="Q8GXF8"/>
<dbReference type="FunCoup" id="Q8GXF8">
    <property type="interactions" value="26"/>
</dbReference>
<dbReference type="STRING" id="3702.Q8GXF8"/>
<dbReference type="PaxDb" id="3702-AT5G02750.1"/>
<dbReference type="EnsemblPlants" id="AT5G02750.1">
    <property type="protein sequence ID" value="AT5G02750.1"/>
    <property type="gene ID" value="AT5G02750"/>
</dbReference>
<dbReference type="GeneID" id="831806"/>
<dbReference type="Gramene" id="AT5G02750.1">
    <property type="protein sequence ID" value="AT5G02750.1"/>
    <property type="gene ID" value="AT5G02750"/>
</dbReference>
<dbReference type="KEGG" id="ath:AT5G02750"/>
<dbReference type="Araport" id="AT5G02750"/>
<dbReference type="TAIR" id="AT5G02750">
    <property type="gene designation" value="SGR9"/>
</dbReference>
<dbReference type="eggNOG" id="KOG0800">
    <property type="taxonomic scope" value="Eukaryota"/>
</dbReference>
<dbReference type="HOGENOM" id="CLU_067430_0_0_1"/>
<dbReference type="InParanoid" id="Q8GXF8"/>
<dbReference type="OMA" id="CDHLFHW"/>
<dbReference type="PhylomeDB" id="Q8GXF8"/>
<dbReference type="UniPathway" id="UPA00143"/>
<dbReference type="PRO" id="PR:Q8GXF8"/>
<dbReference type="Proteomes" id="UP000006548">
    <property type="component" value="Chromosome 5"/>
</dbReference>
<dbReference type="ExpressionAtlas" id="Q8GXF8">
    <property type="expression patterns" value="baseline and differential"/>
</dbReference>
<dbReference type="GO" id="GO:0009501">
    <property type="term" value="C:amyloplast"/>
    <property type="evidence" value="ECO:0000314"/>
    <property type="project" value="TAIR"/>
</dbReference>
<dbReference type="GO" id="GO:0004842">
    <property type="term" value="F:ubiquitin-protein transferase activity"/>
    <property type="evidence" value="ECO:0000314"/>
    <property type="project" value="TAIR"/>
</dbReference>
<dbReference type="GO" id="GO:0008270">
    <property type="term" value="F:zinc ion binding"/>
    <property type="evidence" value="ECO:0007669"/>
    <property type="project" value="UniProtKB-KW"/>
</dbReference>
<dbReference type="GO" id="GO:0009630">
    <property type="term" value="P:gravitropism"/>
    <property type="evidence" value="ECO:0000315"/>
    <property type="project" value="TAIR"/>
</dbReference>
<dbReference type="GO" id="GO:0016567">
    <property type="term" value="P:protein ubiquitination"/>
    <property type="evidence" value="ECO:0007669"/>
    <property type="project" value="UniProtKB-UniPathway"/>
</dbReference>
<dbReference type="CDD" id="cd16454">
    <property type="entry name" value="RING-H2_PA-TM-RING"/>
    <property type="match status" value="1"/>
</dbReference>
<dbReference type="FunFam" id="3.30.40.10:FF:000873">
    <property type="entry name" value="E3 ubiquitin-protein ligase SGR9, amyloplastic"/>
    <property type="match status" value="1"/>
</dbReference>
<dbReference type="Gene3D" id="3.30.40.10">
    <property type="entry name" value="Zinc/RING finger domain, C3HC4 (zinc finger)"/>
    <property type="match status" value="1"/>
</dbReference>
<dbReference type="InterPro" id="IPR001841">
    <property type="entry name" value="Znf_RING"/>
</dbReference>
<dbReference type="InterPro" id="IPR013083">
    <property type="entry name" value="Znf_RING/FYVE/PHD"/>
</dbReference>
<dbReference type="PANTHER" id="PTHR15710">
    <property type="entry name" value="E3 UBIQUITIN-PROTEIN LIGASE PRAJA"/>
    <property type="match status" value="1"/>
</dbReference>
<dbReference type="PANTHER" id="PTHR15710:SF67">
    <property type="entry name" value="E3 UBIQUITIN-PROTEIN LIGASE SGR9, AMYLOPLASTIC"/>
    <property type="match status" value="1"/>
</dbReference>
<dbReference type="Pfam" id="PF13639">
    <property type="entry name" value="zf-RING_2"/>
    <property type="match status" value="1"/>
</dbReference>
<dbReference type="SMART" id="SM00184">
    <property type="entry name" value="RING"/>
    <property type="match status" value="1"/>
</dbReference>
<dbReference type="SUPFAM" id="SSF57850">
    <property type="entry name" value="RING/U-box"/>
    <property type="match status" value="1"/>
</dbReference>
<dbReference type="PROSITE" id="PS50089">
    <property type="entry name" value="ZF_RING_2"/>
    <property type="match status" value="1"/>
</dbReference>
<name>SHGR9_ARATH</name>
<reference key="1">
    <citation type="journal article" date="2000" name="Nature">
        <title>Sequence and analysis of chromosome 5 of the plant Arabidopsis thaliana.</title>
        <authorList>
            <person name="Tabata S."/>
            <person name="Kaneko T."/>
            <person name="Nakamura Y."/>
            <person name="Kotani H."/>
            <person name="Kato T."/>
            <person name="Asamizu E."/>
            <person name="Miyajima N."/>
            <person name="Sasamoto S."/>
            <person name="Kimura T."/>
            <person name="Hosouchi T."/>
            <person name="Kawashima K."/>
            <person name="Kohara M."/>
            <person name="Matsumoto M."/>
            <person name="Matsuno A."/>
            <person name="Muraki A."/>
            <person name="Nakayama S."/>
            <person name="Nakazaki N."/>
            <person name="Naruo K."/>
            <person name="Okumura S."/>
            <person name="Shinpo S."/>
            <person name="Takeuchi C."/>
            <person name="Wada T."/>
            <person name="Watanabe A."/>
            <person name="Yamada M."/>
            <person name="Yasuda M."/>
            <person name="Sato S."/>
            <person name="de la Bastide M."/>
            <person name="Huang E."/>
            <person name="Spiegel L."/>
            <person name="Gnoj L."/>
            <person name="O'Shaughnessy A."/>
            <person name="Preston R."/>
            <person name="Habermann K."/>
            <person name="Murray J."/>
            <person name="Johnson D."/>
            <person name="Rohlfing T."/>
            <person name="Nelson J."/>
            <person name="Stoneking T."/>
            <person name="Pepin K."/>
            <person name="Spieth J."/>
            <person name="Sekhon M."/>
            <person name="Armstrong J."/>
            <person name="Becker M."/>
            <person name="Belter E."/>
            <person name="Cordum H."/>
            <person name="Cordes M."/>
            <person name="Courtney L."/>
            <person name="Courtney W."/>
            <person name="Dante M."/>
            <person name="Du H."/>
            <person name="Edwards J."/>
            <person name="Fryman J."/>
            <person name="Haakensen B."/>
            <person name="Lamar E."/>
            <person name="Latreille P."/>
            <person name="Leonard S."/>
            <person name="Meyer R."/>
            <person name="Mulvaney E."/>
            <person name="Ozersky P."/>
            <person name="Riley A."/>
            <person name="Strowmatt C."/>
            <person name="Wagner-McPherson C."/>
            <person name="Wollam A."/>
            <person name="Yoakum M."/>
            <person name="Bell M."/>
            <person name="Dedhia N."/>
            <person name="Parnell L."/>
            <person name="Shah R."/>
            <person name="Rodriguez M."/>
            <person name="Hoon See L."/>
            <person name="Vil D."/>
            <person name="Baker J."/>
            <person name="Kirchoff K."/>
            <person name="Toth K."/>
            <person name="King L."/>
            <person name="Bahret A."/>
            <person name="Miller B."/>
            <person name="Marra M.A."/>
            <person name="Martienssen R."/>
            <person name="McCombie W.R."/>
            <person name="Wilson R.K."/>
            <person name="Murphy G."/>
            <person name="Bancroft I."/>
            <person name="Volckaert G."/>
            <person name="Wambutt R."/>
            <person name="Duesterhoeft A."/>
            <person name="Stiekema W."/>
            <person name="Pohl T."/>
            <person name="Entian K.-D."/>
            <person name="Terryn N."/>
            <person name="Hartley N."/>
            <person name="Bent E."/>
            <person name="Johnson S."/>
            <person name="Langham S.-A."/>
            <person name="McCullagh B."/>
            <person name="Robben J."/>
            <person name="Grymonprez B."/>
            <person name="Zimmermann W."/>
            <person name="Ramsperger U."/>
            <person name="Wedler H."/>
            <person name="Balke K."/>
            <person name="Wedler E."/>
            <person name="Peters S."/>
            <person name="van Staveren M."/>
            <person name="Dirkse W."/>
            <person name="Mooijman P."/>
            <person name="Klein Lankhorst R."/>
            <person name="Weitzenegger T."/>
            <person name="Bothe G."/>
            <person name="Rose M."/>
            <person name="Hauf J."/>
            <person name="Berneiser S."/>
            <person name="Hempel S."/>
            <person name="Feldpausch M."/>
            <person name="Lamberth S."/>
            <person name="Villarroel R."/>
            <person name="Gielen J."/>
            <person name="Ardiles W."/>
            <person name="Bents O."/>
            <person name="Lemcke K."/>
            <person name="Kolesov G."/>
            <person name="Mayer K.F.X."/>
            <person name="Rudd S."/>
            <person name="Schoof H."/>
            <person name="Schueller C."/>
            <person name="Zaccaria P."/>
            <person name="Mewes H.-W."/>
            <person name="Bevan M."/>
            <person name="Fransz P.F."/>
        </authorList>
    </citation>
    <scope>NUCLEOTIDE SEQUENCE [LARGE SCALE GENOMIC DNA]</scope>
    <source>
        <strain>cv. Columbia</strain>
    </source>
</reference>
<reference key="2">
    <citation type="journal article" date="2017" name="Plant J.">
        <title>Araport11: a complete reannotation of the Arabidopsis thaliana reference genome.</title>
        <authorList>
            <person name="Cheng C.Y."/>
            <person name="Krishnakumar V."/>
            <person name="Chan A.P."/>
            <person name="Thibaud-Nissen F."/>
            <person name="Schobel S."/>
            <person name="Town C.D."/>
        </authorList>
    </citation>
    <scope>GENOME REANNOTATION</scope>
    <source>
        <strain>cv. Columbia</strain>
    </source>
</reference>
<reference key="3">
    <citation type="journal article" date="2002" name="Science">
        <title>Functional annotation of a full-length Arabidopsis cDNA collection.</title>
        <authorList>
            <person name="Seki M."/>
            <person name="Narusaka M."/>
            <person name="Kamiya A."/>
            <person name="Ishida J."/>
            <person name="Satou M."/>
            <person name="Sakurai T."/>
            <person name="Nakajima M."/>
            <person name="Enju A."/>
            <person name="Akiyama K."/>
            <person name="Oono Y."/>
            <person name="Muramatsu M."/>
            <person name="Hayashizaki Y."/>
            <person name="Kawai J."/>
            <person name="Carninci P."/>
            <person name="Itoh M."/>
            <person name="Ishii Y."/>
            <person name="Arakawa T."/>
            <person name="Shibata K."/>
            <person name="Shinagawa A."/>
            <person name="Shinozaki K."/>
        </authorList>
    </citation>
    <scope>NUCLEOTIDE SEQUENCE [LARGE SCALE MRNA]</scope>
    <source>
        <strain>cv. Columbia</strain>
    </source>
</reference>
<reference key="4">
    <citation type="journal article" date="2003" name="Science">
        <title>Empirical analysis of transcriptional activity in the Arabidopsis genome.</title>
        <authorList>
            <person name="Yamada K."/>
            <person name="Lim J."/>
            <person name="Dale J.M."/>
            <person name="Chen H."/>
            <person name="Shinn P."/>
            <person name="Palm C.J."/>
            <person name="Southwick A.M."/>
            <person name="Wu H.C."/>
            <person name="Kim C.J."/>
            <person name="Nguyen M."/>
            <person name="Pham P.K."/>
            <person name="Cheuk R.F."/>
            <person name="Karlin-Newmann G."/>
            <person name="Liu S.X."/>
            <person name="Lam B."/>
            <person name="Sakano H."/>
            <person name="Wu T."/>
            <person name="Yu G."/>
            <person name="Miranda M."/>
            <person name="Quach H.L."/>
            <person name="Tripp M."/>
            <person name="Chang C.H."/>
            <person name="Lee J.M."/>
            <person name="Toriumi M.J."/>
            <person name="Chan M.M."/>
            <person name="Tang C.C."/>
            <person name="Onodera C.S."/>
            <person name="Deng J.M."/>
            <person name="Akiyama K."/>
            <person name="Ansari Y."/>
            <person name="Arakawa T."/>
            <person name="Banh J."/>
            <person name="Banno F."/>
            <person name="Bowser L."/>
            <person name="Brooks S.Y."/>
            <person name="Carninci P."/>
            <person name="Chao Q."/>
            <person name="Choy N."/>
            <person name="Enju A."/>
            <person name="Goldsmith A.D."/>
            <person name="Gurjal M."/>
            <person name="Hansen N.F."/>
            <person name="Hayashizaki Y."/>
            <person name="Johnson-Hopson C."/>
            <person name="Hsuan V.W."/>
            <person name="Iida K."/>
            <person name="Karnes M."/>
            <person name="Khan S."/>
            <person name="Koesema E."/>
            <person name="Ishida J."/>
            <person name="Jiang P.X."/>
            <person name="Jones T."/>
            <person name="Kawai J."/>
            <person name="Kamiya A."/>
            <person name="Meyers C."/>
            <person name="Nakajima M."/>
            <person name="Narusaka M."/>
            <person name="Seki M."/>
            <person name="Sakurai T."/>
            <person name="Satou M."/>
            <person name="Tamse R."/>
            <person name="Vaysberg M."/>
            <person name="Wallender E.K."/>
            <person name="Wong C."/>
            <person name="Yamamura Y."/>
            <person name="Yuan S."/>
            <person name="Shinozaki K."/>
            <person name="Davis R.W."/>
            <person name="Theologis A."/>
            <person name="Ecker J.R."/>
        </authorList>
    </citation>
    <scope>NUCLEOTIDE SEQUENCE [LARGE SCALE MRNA]</scope>
    <source>
        <strain>cv. Columbia</strain>
    </source>
</reference>
<reference key="5">
    <citation type="journal article" date="2011" name="Plant Cell">
        <title>An Arabidopsis E3 ligase, SHOOT GRAVITROPISM9, modulates the interaction between statoliths and F-actin in gravity sensing.</title>
        <authorList>
            <person name="Nakamura M."/>
            <person name="Toyota M."/>
            <person name="Tasaka M."/>
            <person name="Morita M.T."/>
        </authorList>
    </citation>
    <scope>FUNCTION</scope>
    <scope>DISRUPTION PHENOTYPE</scope>
    <scope>MUTAGENESIS OF CYS-232 AND TRP-244</scope>
    <scope>SUBCELLULAR LOCATION</scope>
    <scope>TISSUE SPECIFICITY</scope>
</reference>
<accession>Q8GXF8</accession>
<accession>Q9LZ10</accession>